<proteinExistence type="predicted"/>
<accession>Q10938</accession>
<sequence length="413" mass="45681">MEKSQPLSEFFSKQLVDPVSDALRSHTCSEQEMTLLESAIVHARDSLLEEIQRSKISEDVTQTVDCLLSRVDELLEETRNFAPISPLSSEAPDILPAMILFNSLCSSKSLDLEPIEIKVEAMENPVVSPPIFSSDDSVKGMPSRKRAKRSLEDTVQMLSKENSVSPPPPSLPFVLPQIPVPIPFSNAALMQRWLGHPLTNPAYLNAMFQHQPAPKPSEEQFAALMKITMHAANFMKTVPQLPVSNHFTESDAEDIKIDVESDEGEIEVSPSPSTGDITENESSSSSTGPMISPNCGDGDCALEKPFICMHNNCGKRFANKFLLKKHMFIHTGLRPHTCPHCHKKFNRKDNLLRHKKTHSPTSAHLGPILPKNPFHGIPQLPVLHNIALTQGFSHFHALKMSLETGATAVRSLS</sequence>
<dbReference type="EMBL" id="FO080169">
    <property type="protein sequence ID" value="CCD61749.1"/>
    <property type="molecule type" value="Genomic_DNA"/>
</dbReference>
<dbReference type="PIR" id="T15326">
    <property type="entry name" value="T15326"/>
</dbReference>
<dbReference type="RefSeq" id="NP_508109.1">
    <property type="nucleotide sequence ID" value="NM_075708.7"/>
</dbReference>
<dbReference type="SMR" id="Q10938"/>
<dbReference type="BioGRID" id="45356">
    <property type="interactions" value="1"/>
</dbReference>
<dbReference type="STRING" id="6239.B0310.2a.1"/>
<dbReference type="PaxDb" id="6239-B0310.2"/>
<dbReference type="EnsemblMetazoa" id="B0310.2a.1">
    <property type="protein sequence ID" value="B0310.2a.1"/>
    <property type="gene ID" value="WBGene00015138"/>
</dbReference>
<dbReference type="GeneID" id="180403"/>
<dbReference type="KEGG" id="cel:CELE_B0310.2"/>
<dbReference type="UCSC" id="B0310.2.1">
    <property type="organism name" value="c. elegans"/>
</dbReference>
<dbReference type="AGR" id="WB:WBGene00015138"/>
<dbReference type="CTD" id="180403"/>
<dbReference type="WormBase" id="B0310.2a">
    <property type="protein sequence ID" value="CE03875"/>
    <property type="gene ID" value="WBGene00015138"/>
</dbReference>
<dbReference type="eggNOG" id="KOG1721">
    <property type="taxonomic scope" value="Eukaryota"/>
</dbReference>
<dbReference type="HOGENOM" id="CLU_624435_0_0_1"/>
<dbReference type="InParanoid" id="Q10938"/>
<dbReference type="OMA" id="CMHNNCG"/>
<dbReference type="OrthoDB" id="654211at2759"/>
<dbReference type="PRO" id="PR:Q10938"/>
<dbReference type="Proteomes" id="UP000001940">
    <property type="component" value="Chromosome X"/>
</dbReference>
<dbReference type="Bgee" id="WBGene00015138">
    <property type="expression patterns" value="Expressed in embryo and 3 other cell types or tissues"/>
</dbReference>
<dbReference type="ExpressionAtlas" id="Q10938">
    <property type="expression patterns" value="baseline and differential"/>
</dbReference>
<dbReference type="GO" id="GO:0005634">
    <property type="term" value="C:nucleus"/>
    <property type="evidence" value="ECO:0007669"/>
    <property type="project" value="UniProtKB-SubCell"/>
</dbReference>
<dbReference type="GO" id="GO:0003677">
    <property type="term" value="F:DNA binding"/>
    <property type="evidence" value="ECO:0007669"/>
    <property type="project" value="UniProtKB-KW"/>
</dbReference>
<dbReference type="GO" id="GO:0008270">
    <property type="term" value="F:zinc ion binding"/>
    <property type="evidence" value="ECO:0007669"/>
    <property type="project" value="UniProtKB-KW"/>
</dbReference>
<dbReference type="FunFam" id="3.30.160.60:FF:001732">
    <property type="entry name" value="Zgc:162936"/>
    <property type="match status" value="1"/>
</dbReference>
<dbReference type="FunFam" id="3.30.160.60:FF:002725">
    <property type="entry name" value="Zinc finger protein B0310.2"/>
    <property type="match status" value="1"/>
</dbReference>
<dbReference type="Gene3D" id="3.30.160.60">
    <property type="entry name" value="Classic Zinc Finger"/>
    <property type="match status" value="2"/>
</dbReference>
<dbReference type="InterPro" id="IPR036236">
    <property type="entry name" value="Znf_C2H2_sf"/>
</dbReference>
<dbReference type="InterPro" id="IPR013087">
    <property type="entry name" value="Znf_C2H2_type"/>
</dbReference>
<dbReference type="PANTHER" id="PTHR23235">
    <property type="entry name" value="KRUEPPEL-LIKE TRANSCRIPTION FACTOR"/>
    <property type="match status" value="1"/>
</dbReference>
<dbReference type="PANTHER" id="PTHR23235:SF120">
    <property type="entry name" value="KRUPPEL-LIKE FACTOR 15"/>
    <property type="match status" value="1"/>
</dbReference>
<dbReference type="Pfam" id="PF00096">
    <property type="entry name" value="zf-C2H2"/>
    <property type="match status" value="2"/>
</dbReference>
<dbReference type="SMART" id="SM00355">
    <property type="entry name" value="ZnF_C2H2"/>
    <property type="match status" value="2"/>
</dbReference>
<dbReference type="SUPFAM" id="SSF57667">
    <property type="entry name" value="beta-beta-alpha zinc fingers"/>
    <property type="match status" value="1"/>
</dbReference>
<dbReference type="PROSITE" id="PS00028">
    <property type="entry name" value="ZINC_FINGER_C2H2_1"/>
    <property type="match status" value="2"/>
</dbReference>
<dbReference type="PROSITE" id="PS50157">
    <property type="entry name" value="ZINC_FINGER_C2H2_2"/>
    <property type="match status" value="2"/>
</dbReference>
<feature type="chain" id="PRO_0000046898" description="Putative zinc finger protein B0310.2">
    <location>
        <begin position="1"/>
        <end position="413"/>
    </location>
</feature>
<feature type="zinc finger region" description="C2H2-type 1" evidence="1">
    <location>
        <begin position="306"/>
        <end position="330"/>
    </location>
</feature>
<feature type="zinc finger region" description="C2H2-type 2" evidence="1">
    <location>
        <begin position="336"/>
        <end position="358"/>
    </location>
</feature>
<feature type="region of interest" description="Disordered" evidence="2">
    <location>
        <begin position="130"/>
        <end position="151"/>
    </location>
</feature>
<feature type="region of interest" description="Disordered" evidence="2">
    <location>
        <begin position="259"/>
        <end position="290"/>
    </location>
</feature>
<feature type="compositionally biased region" description="Polar residues" evidence="2">
    <location>
        <begin position="270"/>
        <end position="281"/>
    </location>
</feature>
<evidence type="ECO:0000255" key="1">
    <source>
        <dbReference type="PROSITE-ProRule" id="PRU00042"/>
    </source>
</evidence>
<evidence type="ECO:0000256" key="2">
    <source>
        <dbReference type="SAM" id="MobiDB-lite"/>
    </source>
</evidence>
<evidence type="ECO:0000305" key="3"/>
<protein>
    <recommendedName>
        <fullName>Putative zinc finger protein B0310.2</fullName>
    </recommendedName>
</protein>
<gene>
    <name type="ORF">B0310.2</name>
</gene>
<organism>
    <name type="scientific">Caenorhabditis elegans</name>
    <dbReference type="NCBI Taxonomy" id="6239"/>
    <lineage>
        <taxon>Eukaryota</taxon>
        <taxon>Metazoa</taxon>
        <taxon>Ecdysozoa</taxon>
        <taxon>Nematoda</taxon>
        <taxon>Chromadorea</taxon>
        <taxon>Rhabditida</taxon>
        <taxon>Rhabditina</taxon>
        <taxon>Rhabditomorpha</taxon>
        <taxon>Rhabditoidea</taxon>
        <taxon>Rhabditidae</taxon>
        <taxon>Peloderinae</taxon>
        <taxon>Caenorhabditis</taxon>
    </lineage>
</organism>
<reference key="1">
    <citation type="journal article" date="1998" name="Science">
        <title>Genome sequence of the nematode C. elegans: a platform for investigating biology.</title>
        <authorList>
            <consortium name="The C. elegans sequencing consortium"/>
        </authorList>
    </citation>
    <scope>NUCLEOTIDE SEQUENCE [LARGE SCALE GENOMIC DNA]</scope>
    <source>
        <strain>Bristol N2</strain>
    </source>
</reference>
<keyword id="KW-0238">DNA-binding</keyword>
<keyword id="KW-0479">Metal-binding</keyword>
<keyword id="KW-0539">Nucleus</keyword>
<keyword id="KW-1185">Reference proteome</keyword>
<keyword id="KW-0677">Repeat</keyword>
<keyword id="KW-0862">Zinc</keyword>
<keyword id="KW-0863">Zinc-finger</keyword>
<name>YWS2_CAEEL</name>
<comment type="subcellular location">
    <subcellularLocation>
        <location evidence="3">Nucleus</location>
    </subcellularLocation>
</comment>